<feature type="initiator methionine" description="Removed" evidence="2">
    <location>
        <position position="1"/>
    </location>
</feature>
<feature type="chain" id="PRO_0000251169" description="NADH dehydrogenase [ubiquinone] 1 alpha subcomplex subunit 6">
    <location>
        <begin position="2"/>
        <end position="128"/>
    </location>
</feature>
<feature type="modified residue" description="N-acetylalanine" evidence="2">
    <location>
        <position position="2"/>
    </location>
</feature>
<feature type="modified residue" description="Phosphoserine" evidence="1">
    <location>
        <position position="11"/>
    </location>
</feature>
<organism>
    <name type="scientific">Pongo pygmaeus</name>
    <name type="common">Bornean orangutan</name>
    <dbReference type="NCBI Taxonomy" id="9600"/>
    <lineage>
        <taxon>Eukaryota</taxon>
        <taxon>Metazoa</taxon>
        <taxon>Chordata</taxon>
        <taxon>Craniata</taxon>
        <taxon>Vertebrata</taxon>
        <taxon>Euteleostomi</taxon>
        <taxon>Mammalia</taxon>
        <taxon>Eutheria</taxon>
        <taxon>Euarchontoglires</taxon>
        <taxon>Primates</taxon>
        <taxon>Haplorrhini</taxon>
        <taxon>Catarrhini</taxon>
        <taxon>Hominidae</taxon>
        <taxon>Pongo</taxon>
    </lineage>
</organism>
<protein>
    <recommendedName>
        <fullName evidence="1">NADH dehydrogenase [ubiquinone] 1 alpha subcomplex subunit 6</fullName>
    </recommendedName>
    <alternativeName>
        <fullName>Complex I-B14</fullName>
        <shortName>CI-B14</shortName>
    </alternativeName>
    <alternativeName>
        <fullName>NADH-ubiquinone oxidoreductase B14 subunit</fullName>
    </alternativeName>
</protein>
<dbReference type="EMBL" id="DQ885731">
    <property type="protein sequence ID" value="ABH12240.1"/>
    <property type="molecule type" value="mRNA"/>
</dbReference>
<dbReference type="SMR" id="Q0MQA3"/>
<dbReference type="GO" id="GO:0005743">
    <property type="term" value="C:mitochondrial inner membrane"/>
    <property type="evidence" value="ECO:0007669"/>
    <property type="project" value="UniProtKB-SubCell"/>
</dbReference>
<dbReference type="GO" id="GO:0045271">
    <property type="term" value="C:respiratory chain complex I"/>
    <property type="evidence" value="ECO:0000250"/>
    <property type="project" value="UniProtKB"/>
</dbReference>
<dbReference type="GO" id="GO:0032981">
    <property type="term" value="P:mitochondrial respiratory chain complex I assembly"/>
    <property type="evidence" value="ECO:0000250"/>
    <property type="project" value="UniProtKB"/>
</dbReference>
<dbReference type="GO" id="GO:0006979">
    <property type="term" value="P:response to oxidative stress"/>
    <property type="evidence" value="ECO:0007669"/>
    <property type="project" value="TreeGrafter"/>
</dbReference>
<dbReference type="CDD" id="cd20266">
    <property type="entry name" value="Complex1_LYR_NDUFA6_LYRM6"/>
    <property type="match status" value="1"/>
</dbReference>
<dbReference type="InterPro" id="IPR045299">
    <property type="entry name" value="Complex1_LYR_NDUFA6_LYRM6"/>
</dbReference>
<dbReference type="InterPro" id="IPR016488">
    <property type="entry name" value="NADH_Ub_cplx-1_asu_su-6"/>
</dbReference>
<dbReference type="PANTHER" id="PTHR12964:SF0">
    <property type="entry name" value="NADH DEHYDROGENASE [UBIQUINONE] 1 ALPHA SUBCOMPLEX SUBUNIT 6"/>
    <property type="match status" value="1"/>
</dbReference>
<dbReference type="PANTHER" id="PTHR12964">
    <property type="entry name" value="NADH-UBIQUINONE OXIDOREDUCTASE B14 SUBUNIT"/>
    <property type="match status" value="1"/>
</dbReference>
<dbReference type="Pfam" id="PF13233">
    <property type="entry name" value="Complex1_LYR_2"/>
    <property type="match status" value="1"/>
</dbReference>
<dbReference type="PIRSF" id="PIRSF006643">
    <property type="entry name" value="NDUA6"/>
    <property type="match status" value="1"/>
</dbReference>
<keyword id="KW-0007">Acetylation</keyword>
<keyword id="KW-0249">Electron transport</keyword>
<keyword id="KW-0472">Membrane</keyword>
<keyword id="KW-0496">Mitochondrion</keyword>
<keyword id="KW-0999">Mitochondrion inner membrane</keyword>
<keyword id="KW-0597">Phosphoprotein</keyword>
<keyword id="KW-0679">Respiratory chain</keyword>
<keyword id="KW-0813">Transport</keyword>
<accession>Q0MQA3</accession>
<evidence type="ECO:0000250" key="1">
    <source>
        <dbReference type="UniProtKB" id="P56556"/>
    </source>
</evidence>
<evidence type="ECO:0000250" key="2">
    <source>
        <dbReference type="UniProtKB" id="Q02366"/>
    </source>
</evidence>
<evidence type="ECO:0000305" key="3"/>
<sequence length="128" mass="15064">MAGSGVRQAASTASTFVKPIFSRDMNEAKRRVRELYRAWYREVPNTVHQFQLDITVKMGRDKVREMFMKNAHVTDPRVVDLLVIKGKIELEETINVWKQQTHVMRFFHETEAPRPKDFLSKFYVGHDP</sequence>
<comment type="function">
    <text evidence="1">Accessory subunit of the mitochondrial membrane respiratory chain NADH dehydrogenase (Complex I), that is believed to be not involved in catalysis. Required for proper complex I assembly. Complex I functions in the transfer of electrons from NADH to the respiratory chain. The immediate electron acceptor for the enzyme is believed to be ubiquinone.</text>
</comment>
<comment type="subunit">
    <text evidence="1">Mammalian complex I is composed of 45 different subunits.</text>
</comment>
<comment type="subcellular location">
    <subcellularLocation>
        <location evidence="1">Mitochondrion inner membrane</location>
        <topology evidence="1">Peripheral membrane protein</topology>
        <orientation evidence="1">Matrix side</orientation>
    </subcellularLocation>
</comment>
<comment type="similarity">
    <text evidence="3">Belongs to the complex I LYR family.</text>
</comment>
<gene>
    <name evidence="1" type="primary">NDUFA6</name>
</gene>
<name>NDUA6_PONPY</name>
<reference key="1">
    <citation type="journal article" date="2006" name="Gene">
        <title>Adaptive selection of mitochondrial complex I subunits during primate radiation.</title>
        <authorList>
            <person name="Mishmar D."/>
            <person name="Ruiz-Pesini E."/>
            <person name="Mondragon-Palomino M."/>
            <person name="Procaccio V."/>
            <person name="Gaut B."/>
            <person name="Wallace D.C."/>
        </authorList>
    </citation>
    <scope>NUCLEOTIDE SEQUENCE [MRNA]</scope>
</reference>
<proteinExistence type="evidence at transcript level"/>